<name>YAII_SALTY</name>
<comment type="similarity">
    <text evidence="1">Belongs to the UPF0178 family.</text>
</comment>
<reference key="1">
    <citation type="journal article" date="2001" name="Nature">
        <title>Complete genome sequence of Salmonella enterica serovar Typhimurium LT2.</title>
        <authorList>
            <person name="McClelland M."/>
            <person name="Sanderson K.E."/>
            <person name="Spieth J."/>
            <person name="Clifton S.W."/>
            <person name="Latreille P."/>
            <person name="Courtney L."/>
            <person name="Porwollik S."/>
            <person name="Ali J."/>
            <person name="Dante M."/>
            <person name="Du F."/>
            <person name="Hou S."/>
            <person name="Layman D."/>
            <person name="Leonard S."/>
            <person name="Nguyen C."/>
            <person name="Scott K."/>
            <person name="Holmes A."/>
            <person name="Grewal N."/>
            <person name="Mulvaney E."/>
            <person name="Ryan E."/>
            <person name="Sun H."/>
            <person name="Florea L."/>
            <person name="Miller W."/>
            <person name="Stoneking T."/>
            <person name="Nhan M."/>
            <person name="Waterston R."/>
            <person name="Wilson R.K."/>
        </authorList>
    </citation>
    <scope>NUCLEOTIDE SEQUENCE [LARGE SCALE GENOMIC DNA]</scope>
    <source>
        <strain>LT2 / SGSC1412 / ATCC 700720</strain>
    </source>
</reference>
<organism>
    <name type="scientific">Salmonella typhimurium (strain LT2 / SGSC1412 / ATCC 700720)</name>
    <dbReference type="NCBI Taxonomy" id="99287"/>
    <lineage>
        <taxon>Bacteria</taxon>
        <taxon>Pseudomonadati</taxon>
        <taxon>Pseudomonadota</taxon>
        <taxon>Gammaproteobacteria</taxon>
        <taxon>Enterobacterales</taxon>
        <taxon>Enterobacteriaceae</taxon>
        <taxon>Salmonella</taxon>
    </lineage>
</organism>
<evidence type="ECO:0000255" key="1">
    <source>
        <dbReference type="HAMAP-Rule" id="MF_00489"/>
    </source>
</evidence>
<sequence>MTIWVDADACPNVIKEILYRAAERMQLPLILVANQALRVPPSRFIRTLRVAAGFDVADNEIVRQCEAGDLVITADIPLAAEVLEKGAAALNPRGERYSDATIRERLTMRDFMDTLRASGVQTGGPNTLSPRDRQHFAAELDKWWLESQRKK</sequence>
<keyword id="KW-1185">Reference proteome</keyword>
<gene>
    <name evidence="1" type="primary">yaiI</name>
    <name type="ordered locus">STM0387</name>
</gene>
<dbReference type="EMBL" id="AE006468">
    <property type="protein sequence ID" value="AAL19341.1"/>
    <property type="molecule type" value="Genomic_DNA"/>
</dbReference>
<dbReference type="RefSeq" id="NP_459382.1">
    <property type="nucleotide sequence ID" value="NC_003197.2"/>
</dbReference>
<dbReference type="RefSeq" id="WP_000158137.1">
    <property type="nucleotide sequence ID" value="NC_003197.2"/>
</dbReference>
<dbReference type="STRING" id="99287.STM0387"/>
<dbReference type="PaxDb" id="99287-STM0387"/>
<dbReference type="GeneID" id="1251906"/>
<dbReference type="KEGG" id="stm:STM0387"/>
<dbReference type="PATRIC" id="fig|99287.12.peg.412"/>
<dbReference type="HOGENOM" id="CLU_106619_1_0_6"/>
<dbReference type="OMA" id="CPVKDEI"/>
<dbReference type="PhylomeDB" id="P67334"/>
<dbReference type="BioCyc" id="SENT99287:STM0387-MONOMER"/>
<dbReference type="Proteomes" id="UP000001014">
    <property type="component" value="Chromosome"/>
</dbReference>
<dbReference type="CDD" id="cd18720">
    <property type="entry name" value="PIN_YqxD-like"/>
    <property type="match status" value="1"/>
</dbReference>
<dbReference type="HAMAP" id="MF_00489">
    <property type="entry name" value="UPF0178"/>
    <property type="match status" value="1"/>
</dbReference>
<dbReference type="InterPro" id="IPR003791">
    <property type="entry name" value="UPF0178"/>
</dbReference>
<dbReference type="NCBIfam" id="NF001095">
    <property type="entry name" value="PRK00124.1"/>
    <property type="match status" value="1"/>
</dbReference>
<dbReference type="PANTHER" id="PTHR35146">
    <property type="entry name" value="UPF0178 PROTEIN YAII"/>
    <property type="match status" value="1"/>
</dbReference>
<dbReference type="PANTHER" id="PTHR35146:SF1">
    <property type="entry name" value="UPF0178 PROTEIN YAII"/>
    <property type="match status" value="1"/>
</dbReference>
<dbReference type="Pfam" id="PF02639">
    <property type="entry name" value="DUF188"/>
    <property type="match status" value="1"/>
</dbReference>
<feature type="chain" id="PRO_0000176004" description="UPF0178 protein YaiI">
    <location>
        <begin position="1"/>
        <end position="151"/>
    </location>
</feature>
<protein>
    <recommendedName>
        <fullName evidence="1">UPF0178 protein YaiI</fullName>
    </recommendedName>
</protein>
<proteinExistence type="inferred from homology"/>
<accession>P67334</accession>
<accession>Q8XEM1</accession>